<evidence type="ECO:0000305" key="1"/>
<evidence type="ECO:0000305" key="2">
    <source>
    </source>
</evidence>
<reference key="1">
    <citation type="journal article" date="1992" name="Nature">
        <title>The complete DNA sequence of yeast chromosome III.</title>
        <authorList>
            <person name="Oliver S.G."/>
            <person name="van der Aart Q.J.M."/>
            <person name="Agostoni-Carbone M.L."/>
            <person name="Aigle M."/>
            <person name="Alberghina L."/>
            <person name="Alexandraki D."/>
            <person name="Antoine G."/>
            <person name="Anwar R."/>
            <person name="Ballesta J.P.G."/>
            <person name="Benit P."/>
            <person name="Berben G."/>
            <person name="Bergantino E."/>
            <person name="Biteau N."/>
            <person name="Bolle P.-A."/>
            <person name="Bolotin-Fukuhara M."/>
            <person name="Brown A."/>
            <person name="Brown A.J.P."/>
            <person name="Buhler J.-M."/>
            <person name="Carcano C."/>
            <person name="Carignani G."/>
            <person name="Cederberg H."/>
            <person name="Chanet R."/>
            <person name="Contreras R."/>
            <person name="Crouzet M."/>
            <person name="Daignan-Fornier B."/>
            <person name="Defoor E."/>
            <person name="Delgado M.D."/>
            <person name="Demolder J."/>
            <person name="Doira C."/>
            <person name="Dubois E."/>
            <person name="Dujon B."/>
            <person name="Duesterhoeft A."/>
            <person name="Erdmann D."/>
            <person name="Esteban M."/>
            <person name="Fabre F."/>
            <person name="Fairhead C."/>
            <person name="Faye G."/>
            <person name="Feldmann H."/>
            <person name="Fiers W."/>
            <person name="Francingues-Gaillard M.-C."/>
            <person name="Franco L."/>
            <person name="Frontali L."/>
            <person name="Fukuhara H."/>
            <person name="Fuller L.J."/>
            <person name="Galland P."/>
            <person name="Gent M.E."/>
            <person name="Gigot D."/>
            <person name="Gilliquet V."/>
            <person name="Glansdorff N."/>
            <person name="Goffeau A."/>
            <person name="Grenson M."/>
            <person name="Grisanti P."/>
            <person name="Grivell L.A."/>
            <person name="de Haan M."/>
            <person name="Haasemann M."/>
            <person name="Hatat D."/>
            <person name="Hoenicka J."/>
            <person name="Hegemann J.H."/>
            <person name="Herbert C.J."/>
            <person name="Hilger F."/>
            <person name="Hohmann S."/>
            <person name="Hollenberg C.P."/>
            <person name="Huse K."/>
            <person name="Iborra F."/>
            <person name="Indge K.J."/>
            <person name="Isono K."/>
            <person name="Jacq C."/>
            <person name="Jacquet M."/>
            <person name="James C.M."/>
            <person name="Jauniaux J.-C."/>
            <person name="Jia Y."/>
            <person name="Jimenez A."/>
            <person name="Kelly A."/>
            <person name="Kleinhans U."/>
            <person name="Kreisl P."/>
            <person name="Lanfranchi G."/>
            <person name="Lewis C."/>
            <person name="van der Linden C.G."/>
            <person name="Lucchini G."/>
            <person name="Lutzenkirchen K."/>
            <person name="Maat M.J."/>
            <person name="Mallet L."/>
            <person name="Mannhaupt G."/>
            <person name="Martegani E."/>
            <person name="Mathieu A."/>
            <person name="Maurer C.T.C."/>
            <person name="McConnell D."/>
            <person name="McKee R.A."/>
            <person name="Messenguy F."/>
            <person name="Mewes H.-W."/>
            <person name="Molemans F."/>
            <person name="Montague M.A."/>
            <person name="Muzi Falconi M."/>
            <person name="Navas L."/>
            <person name="Newlon C.S."/>
            <person name="Noone D."/>
            <person name="Pallier C."/>
            <person name="Panzeri L."/>
            <person name="Pearson B.M."/>
            <person name="Perea J."/>
            <person name="Philippsen P."/>
            <person name="Pierard A."/>
            <person name="Planta R.J."/>
            <person name="Plevani P."/>
            <person name="Poetsch B."/>
            <person name="Pohl F.M."/>
            <person name="Purnelle B."/>
            <person name="Ramezani Rad M."/>
            <person name="Rasmussen S.W."/>
            <person name="Raynal A."/>
            <person name="Remacha M.A."/>
            <person name="Richterich P."/>
            <person name="Roberts A.B."/>
            <person name="Rodriguez F."/>
            <person name="Sanz E."/>
            <person name="Schaaff-Gerstenschlaeger I."/>
            <person name="Scherens B."/>
            <person name="Schweitzer B."/>
            <person name="Shu Y."/>
            <person name="Skala J."/>
            <person name="Slonimski P.P."/>
            <person name="Sor F."/>
            <person name="Soustelle C."/>
            <person name="Spiegelberg R."/>
            <person name="Stateva L.I."/>
            <person name="Steensma H.Y."/>
            <person name="Steiner S."/>
            <person name="Thierry A."/>
            <person name="Thireos G."/>
            <person name="Tzermia M."/>
            <person name="Urrestarazu L.A."/>
            <person name="Valle G."/>
            <person name="Vetter I."/>
            <person name="van Vliet-Reedijk J.C."/>
            <person name="Voet M."/>
            <person name="Volckaert G."/>
            <person name="Vreken P."/>
            <person name="Wang H."/>
            <person name="Warmington J.R."/>
            <person name="von Wettstein D."/>
            <person name="Wicksteed B.L."/>
            <person name="Wilson C."/>
            <person name="Wurst H."/>
            <person name="Xu G."/>
            <person name="Yoshikawa A."/>
            <person name="Zimmermann F.K."/>
            <person name="Sgouros J.G."/>
        </authorList>
    </citation>
    <scope>NUCLEOTIDE SEQUENCE [LARGE SCALE GENOMIC DNA]</scope>
    <source>
        <strain>ATCC 204508 / S288c</strain>
    </source>
</reference>
<reference key="2">
    <citation type="journal article" date="2014" name="G3 (Bethesda)">
        <title>The reference genome sequence of Saccharomyces cerevisiae: Then and now.</title>
        <authorList>
            <person name="Engel S.R."/>
            <person name="Dietrich F.S."/>
            <person name="Fisk D.G."/>
            <person name="Binkley G."/>
            <person name="Balakrishnan R."/>
            <person name="Costanzo M.C."/>
            <person name="Dwight S.S."/>
            <person name="Hitz B.C."/>
            <person name="Karra K."/>
            <person name="Nash R.S."/>
            <person name="Weng S."/>
            <person name="Wong E.D."/>
            <person name="Lloyd P."/>
            <person name="Skrzypek M.S."/>
            <person name="Miyasato S.R."/>
            <person name="Simison M."/>
            <person name="Cherry J.M."/>
        </authorList>
    </citation>
    <scope>GENOME REANNOTATION</scope>
    <source>
        <strain>ATCC 204508 / S288c</strain>
    </source>
</reference>
<reference key="3">
    <citation type="journal article" date="2002" name="Nat. Biotechnol.">
        <title>An integrated approach for finding overlooked genes in yeast.</title>
        <authorList>
            <person name="Kumar A."/>
            <person name="Harrison P.M."/>
            <person name="Cheung K.-H."/>
            <person name="Lan N."/>
            <person name="Echols N."/>
            <person name="Bertone P."/>
            <person name="Miller P."/>
            <person name="Gerstein M.B."/>
            <person name="Snyder M."/>
        </authorList>
    </citation>
    <scope>NUCLEOTIDE SEQUENCE [GENOMIC DNA]</scope>
</reference>
<accession>Q8TGQ1</accession>
<dbReference type="EMBL" id="X59720">
    <property type="status" value="NOT_ANNOTATED_CDS"/>
    <property type="molecule type" value="Genomic_DNA"/>
</dbReference>
<dbReference type="EMBL" id="AF479937">
    <property type="protein sequence ID" value="AAL79250.1"/>
    <property type="molecule type" value="Genomic_DNA"/>
</dbReference>
<dbReference type="STRING" id="4932.YCR047W-A"/>
<dbReference type="PaxDb" id="4932-YCR047W-A"/>
<dbReference type="EnsemblFungi" id="YCR047W-A_mRNA">
    <property type="protein sequence ID" value="YCR047W-A"/>
    <property type="gene ID" value="YCR047W-A"/>
</dbReference>
<dbReference type="AGR" id="SGD:S000028608"/>
<dbReference type="SGD" id="S000028608">
    <property type="gene designation" value="YCR047W-A"/>
</dbReference>
<dbReference type="HOGENOM" id="CLU_2795888_0_0_1"/>
<sequence>MLGDISKPHHTWSPSCVKISPDSPDPHPISRMKLHGCRFKSSNALSVIFAWICCTLVEPVYLCASLSL</sequence>
<gene>
    <name type="ordered locus">YCR047W-A</name>
</gene>
<proteinExistence type="uncertain"/>
<feature type="chain" id="PRO_0000299838" description="Putative uncharacterized protein YCR047W-A">
    <location>
        <begin position="1"/>
        <end position="68"/>
    </location>
</feature>
<protein>
    <recommendedName>
        <fullName>Putative uncharacterized protein YCR047W-A</fullName>
    </recommendedName>
</protein>
<organism>
    <name type="scientific">Saccharomyces cerevisiae (strain ATCC 204508 / S288c)</name>
    <name type="common">Baker's yeast</name>
    <dbReference type="NCBI Taxonomy" id="559292"/>
    <lineage>
        <taxon>Eukaryota</taxon>
        <taxon>Fungi</taxon>
        <taxon>Dikarya</taxon>
        <taxon>Ascomycota</taxon>
        <taxon>Saccharomycotina</taxon>
        <taxon>Saccharomycetes</taxon>
        <taxon>Saccharomycetales</taxon>
        <taxon>Saccharomycetaceae</taxon>
        <taxon>Saccharomyces</taxon>
    </lineage>
</organism>
<comment type="miscellaneous">
    <text evidence="1">Completely overlaps BUD23.</text>
</comment>
<comment type="caution">
    <text evidence="2">Product of a dubious gene prediction unlikely to encode a functional protein. Because of that it is not part of the S.cerevisiae S288c complete/reference proteome set.</text>
</comment>
<name>YC047_YEAST</name>